<keyword id="KW-0150">Chloroplast</keyword>
<keyword id="KW-0240">DNA-directed RNA polymerase</keyword>
<keyword id="KW-0479">Metal-binding</keyword>
<keyword id="KW-0548">Nucleotidyltransferase</keyword>
<keyword id="KW-0934">Plastid</keyword>
<keyword id="KW-0804">Transcription</keyword>
<keyword id="KW-0808">Transferase</keyword>
<keyword id="KW-0862">Zinc</keyword>
<geneLocation type="chloroplast"/>
<reference key="1">
    <citation type="journal article" date="2006" name="BMC Evol. Biol.">
        <title>Complete plastid genome sequences of Drimys, Liriodendron, and Piper: implications for the phylogenetic relationships of magnoliids.</title>
        <authorList>
            <person name="Cai Z."/>
            <person name="Penaflor C."/>
            <person name="Kuehl J.V."/>
            <person name="Leebens-Mack J."/>
            <person name="Carlson J.E."/>
            <person name="dePamphilis C.W."/>
            <person name="Boore J.L."/>
            <person name="Jansen R.K."/>
        </authorList>
    </citation>
    <scope>NUCLEOTIDE SEQUENCE [LARGE SCALE GENOMIC DNA]</scope>
</reference>
<comment type="function">
    <text evidence="1">DNA-dependent RNA polymerase catalyzes the transcription of DNA into RNA using the four ribonucleoside triphosphates as substrates.</text>
</comment>
<comment type="catalytic activity">
    <reaction evidence="1">
        <text>RNA(n) + a ribonucleoside 5'-triphosphate = RNA(n+1) + diphosphate</text>
        <dbReference type="Rhea" id="RHEA:21248"/>
        <dbReference type="Rhea" id="RHEA-COMP:14527"/>
        <dbReference type="Rhea" id="RHEA-COMP:17342"/>
        <dbReference type="ChEBI" id="CHEBI:33019"/>
        <dbReference type="ChEBI" id="CHEBI:61557"/>
        <dbReference type="ChEBI" id="CHEBI:140395"/>
        <dbReference type="EC" id="2.7.7.6"/>
    </reaction>
</comment>
<comment type="cofactor">
    <cofactor evidence="1">
        <name>Zn(2+)</name>
        <dbReference type="ChEBI" id="CHEBI:29105"/>
    </cofactor>
    <text evidence="1">Binds 1 Zn(2+) ion per subunit.</text>
</comment>
<comment type="subunit">
    <text evidence="1">In plastids the minimal PEP RNA polymerase catalytic core is composed of four subunits: alpha, beta, beta', and beta''. When a (nuclear-encoded) sigma factor is associated with the core the holoenzyme is formed, which can initiate transcription.</text>
</comment>
<comment type="subcellular location">
    <subcellularLocation>
        <location evidence="1">Plastid</location>
        <location evidence="1">Chloroplast</location>
    </subcellularLocation>
</comment>
<comment type="similarity">
    <text evidence="1">Belongs to the RNA polymerase beta' chain family. RpoC2 subfamily.</text>
</comment>
<sequence>MEVLMAERADLVFHNKVIDATAMKRLISRLIDHFGMAYTSHILDQVKTLGFQQATATSISLGIDDLLTIPSKGWLVQDAEQQSLILEKHHHYGNVHAVEKLRQSIEIWYATSEYLRQEMHPNFRMTDPSNPVHIMSFSGARGNASQVHQLVGMRGLMSDPQGQMIDLPIQSNLREGLSLTEYIISCYGARKGVVDTAVRTSDAGYLTRRLVEVVQHIVVRRTDCGTIRGISVSPRNGMTEKILIQTLIGRVLADDIYMGLRCIATRNQDIGIGLVNRFITFRAQSIYIRTPFICRSTSWICRLCYGRSPTHGDLVELGEAVGIIAGQSIGEPGTQLTLRTFHTGGVFTGGTAEHVRAPSNGKIKFNECLVHPTRTRHGHPAFLCYIDLYVTIESQDIIHNVNIPPKSFLLVQNDQYVESEQVIAEIRAGTSTFNFKERVRKHIYSDSEGEMHWSTDVYHAPEYRYGNVHLLPKTSHLWILSGGPCRSSIVPFSLHKDQDQMNVHSLSVERRYISDLSVTNDRVRHKLFSSDPSGKKKERILDYSGPDRIVSNGHWNFLYPAILHENSDLLAKRRRNRFIIPFQYDQEREKELMPRSGISIEIPINGILRRDTILAYFDDPRYRRSSSGITKYGTIEVDSIVKKEDLIEYRGAKEFRPKYQMKVDRFFFIPEEVHILPGSSPIMVRNNSIIGVDTRIALNTRSRVGGLVRVERKKKKIELKIFSGDIHFPGETDKISRHSGILIPPGTGKKNSKESKKWKNWIYVQRITPTKKKYFVSVRPVVTYEIADGINLGTLFPQDLLQERDNVQLRVVNYILYGNGKPIRGIYHTSIQLVRTCLVLNWDQDRNGSIEEVHASFVEVGTNDLIRDFIRIDLVKSPISYIGKRDDTTGSGLIPDNESDRTNINTFYSKTRIQSLTQHQGTIRTFLNRNKECQSFLILSSSDCSRIGPFNGSKSHKVTKESIKEDPMIPIRNSLGPLGTVPKIANFYSSYYLITHNQILLNKYLLLDNLKQTFQVLKYYLMDENGRIYNPNLHSNIIFNPFDLNWCFLRHDYCEETSTIISLGQFICENVCISKYGPHIKSGQVLIVHVDSLVIRSAKPHLATPGATVHGHYGEILSEGDTLVTFIYEKSRSGDITQGLPKVEQVLEVRSIDSISMNLEKRIEGWNEHITRILGIPWGFLIGAELTIAQSRISLVNKIQKVYRSQGVQIHNRHIEIIVRQITSKVLVSEDGMSNVFSPGELIGLLRAERTGRALEEGICYRAILLGITRASLNTQSFISEASFQETARVLAKAALRGRIDWLKGLKENVVLGGMIPVGTGFKGLVHRSRQHNNIPLEIKKKNLFEGEMRDILFHHRELLSSCIPKNFHDTSEQSFTGFNDS</sequence>
<name>RPOC2_LIRTU</name>
<gene>
    <name evidence="1" type="primary">rpoC2</name>
</gene>
<accession>Q0G9M9</accession>
<protein>
    <recommendedName>
        <fullName evidence="1">DNA-directed RNA polymerase subunit beta''</fullName>
        <ecNumber evidence="1">2.7.7.6</ecNumber>
    </recommendedName>
    <alternativeName>
        <fullName evidence="1">PEP</fullName>
    </alternativeName>
    <alternativeName>
        <fullName evidence="1">Plastid-encoded RNA polymerase subunit beta''</fullName>
        <shortName evidence="1">RNA polymerase subunit beta''</shortName>
    </alternativeName>
</protein>
<organism>
    <name type="scientific">Liriodendron tulipifera</name>
    <name type="common">Tuliptree</name>
    <name type="synonym">Tulip poplar</name>
    <dbReference type="NCBI Taxonomy" id="3415"/>
    <lineage>
        <taxon>Eukaryota</taxon>
        <taxon>Viridiplantae</taxon>
        <taxon>Streptophyta</taxon>
        <taxon>Embryophyta</taxon>
        <taxon>Tracheophyta</taxon>
        <taxon>Spermatophyta</taxon>
        <taxon>Magnoliopsida</taxon>
        <taxon>Magnoliidae</taxon>
        <taxon>Magnoliales</taxon>
        <taxon>Magnoliaceae</taxon>
        <taxon>Liriodendron</taxon>
    </lineage>
</organism>
<proteinExistence type="inferred from homology"/>
<feature type="chain" id="PRO_0000277194" description="DNA-directed RNA polymerase subunit beta''">
    <location>
        <begin position="1"/>
        <end position="1382"/>
    </location>
</feature>
<feature type="binding site" evidence="1">
    <location>
        <position position="224"/>
    </location>
    <ligand>
        <name>Zn(2+)</name>
        <dbReference type="ChEBI" id="CHEBI:29105"/>
    </ligand>
</feature>
<feature type="binding site" evidence="1">
    <location>
        <position position="294"/>
    </location>
    <ligand>
        <name>Zn(2+)</name>
        <dbReference type="ChEBI" id="CHEBI:29105"/>
    </ligand>
</feature>
<feature type="binding site" evidence="1">
    <location>
        <position position="301"/>
    </location>
    <ligand>
        <name>Zn(2+)</name>
        <dbReference type="ChEBI" id="CHEBI:29105"/>
    </ligand>
</feature>
<feature type="binding site" evidence="1">
    <location>
        <position position="304"/>
    </location>
    <ligand>
        <name>Zn(2+)</name>
        <dbReference type="ChEBI" id="CHEBI:29105"/>
    </ligand>
</feature>
<dbReference type="EC" id="2.7.7.6" evidence="1"/>
<dbReference type="EMBL" id="DQ899947">
    <property type="protein sequence ID" value="ABI32499.1"/>
    <property type="molecule type" value="Genomic_DNA"/>
</dbReference>
<dbReference type="RefSeq" id="YP_740192.1">
    <property type="nucleotide sequence ID" value="NC_008326.1"/>
</dbReference>
<dbReference type="SMR" id="Q0G9M9"/>
<dbReference type="GeneID" id="4266600"/>
<dbReference type="GO" id="GO:0009507">
    <property type="term" value="C:chloroplast"/>
    <property type="evidence" value="ECO:0007669"/>
    <property type="project" value="UniProtKB-SubCell"/>
</dbReference>
<dbReference type="GO" id="GO:0000428">
    <property type="term" value="C:DNA-directed RNA polymerase complex"/>
    <property type="evidence" value="ECO:0007669"/>
    <property type="project" value="UniProtKB-KW"/>
</dbReference>
<dbReference type="GO" id="GO:0005739">
    <property type="term" value="C:mitochondrion"/>
    <property type="evidence" value="ECO:0007669"/>
    <property type="project" value="GOC"/>
</dbReference>
<dbReference type="GO" id="GO:0003677">
    <property type="term" value="F:DNA binding"/>
    <property type="evidence" value="ECO:0007669"/>
    <property type="project" value="UniProtKB-UniRule"/>
</dbReference>
<dbReference type="GO" id="GO:0003899">
    <property type="term" value="F:DNA-directed RNA polymerase activity"/>
    <property type="evidence" value="ECO:0007669"/>
    <property type="project" value="UniProtKB-UniRule"/>
</dbReference>
<dbReference type="GO" id="GO:0008270">
    <property type="term" value="F:zinc ion binding"/>
    <property type="evidence" value="ECO:0007669"/>
    <property type="project" value="UniProtKB-UniRule"/>
</dbReference>
<dbReference type="GO" id="GO:0006351">
    <property type="term" value="P:DNA-templated transcription"/>
    <property type="evidence" value="ECO:0007669"/>
    <property type="project" value="UniProtKB-UniRule"/>
</dbReference>
<dbReference type="CDD" id="cd02655">
    <property type="entry name" value="RNAP_beta'_C"/>
    <property type="match status" value="1"/>
</dbReference>
<dbReference type="FunFam" id="1.10.132.30:FF:000002">
    <property type="entry name" value="DNA-directed RNA polymerase subunit beta"/>
    <property type="match status" value="1"/>
</dbReference>
<dbReference type="FunFam" id="1.10.1790.20:FF:000002">
    <property type="entry name" value="DNA-directed RNA polymerase subunit beta"/>
    <property type="match status" value="1"/>
</dbReference>
<dbReference type="Gene3D" id="1.10.132.30">
    <property type="match status" value="1"/>
</dbReference>
<dbReference type="Gene3D" id="1.10.150.390">
    <property type="match status" value="1"/>
</dbReference>
<dbReference type="Gene3D" id="1.10.1790.20">
    <property type="match status" value="1"/>
</dbReference>
<dbReference type="Gene3D" id="1.10.274.100">
    <property type="entry name" value="RNA polymerase Rpb1, domain 3"/>
    <property type="match status" value="1"/>
</dbReference>
<dbReference type="HAMAP" id="MF_01324">
    <property type="entry name" value="RNApol_bact_RpoC2"/>
    <property type="match status" value="1"/>
</dbReference>
<dbReference type="InterPro" id="IPR012756">
    <property type="entry name" value="DNA-dir_RpoC2_beta_pp"/>
</dbReference>
<dbReference type="InterPro" id="IPR050254">
    <property type="entry name" value="RNA_pol_beta''_euk"/>
</dbReference>
<dbReference type="InterPro" id="IPR042102">
    <property type="entry name" value="RNA_pol_Rpb1_3_sf"/>
</dbReference>
<dbReference type="InterPro" id="IPR007083">
    <property type="entry name" value="RNA_pol_Rpb1_4"/>
</dbReference>
<dbReference type="InterPro" id="IPR007081">
    <property type="entry name" value="RNA_pol_Rpb1_5"/>
</dbReference>
<dbReference type="InterPro" id="IPR038120">
    <property type="entry name" value="Rpb1_funnel_sf"/>
</dbReference>
<dbReference type="NCBIfam" id="TIGR02388">
    <property type="entry name" value="rpoC2_cyan"/>
    <property type="match status" value="1"/>
</dbReference>
<dbReference type="PANTHER" id="PTHR34995">
    <property type="entry name" value="DNA-DIRECTED RNA POLYMERASE SUBUNIT BETA"/>
    <property type="match status" value="1"/>
</dbReference>
<dbReference type="PANTHER" id="PTHR34995:SF1">
    <property type="entry name" value="DNA-DIRECTED RNA POLYMERASE SUBUNIT BETA"/>
    <property type="match status" value="1"/>
</dbReference>
<dbReference type="Pfam" id="PF05000">
    <property type="entry name" value="RNA_pol_Rpb1_4"/>
    <property type="match status" value="1"/>
</dbReference>
<dbReference type="Pfam" id="PF04998">
    <property type="entry name" value="RNA_pol_Rpb1_5"/>
    <property type="match status" value="2"/>
</dbReference>
<dbReference type="SUPFAM" id="SSF64484">
    <property type="entry name" value="beta and beta-prime subunits of DNA dependent RNA-polymerase"/>
    <property type="match status" value="1"/>
</dbReference>
<evidence type="ECO:0000255" key="1">
    <source>
        <dbReference type="HAMAP-Rule" id="MF_01324"/>
    </source>
</evidence>